<comment type="function">
    <text evidence="2 5">Catalyzes the phosphate monoester hydrolysis of phytic acid (myo-inositol hexakisphosphate), which results in the stepwise formation of myo-inositol pentakis-, tetrakis-, tris-, bis-, and monophosphates, as well as the liberation of inorganic phosphate (PubMed:16630256). Myo-inositol 2-monophosphate is the end product (By similarity). Is also able to dephosphorylate the classic acid phosphatase substrate p-nitrophenyl phosphate (PubMed:16630256).</text>
</comment>
<comment type="catalytic activity">
    <reaction evidence="5">
        <text>1D-myo-inositol hexakisphosphate + H2O = 1D-myo-inositol 1,2,4,5,6-pentakisphosphate + phosphate</text>
        <dbReference type="Rhea" id="RHEA:16989"/>
        <dbReference type="ChEBI" id="CHEBI:15377"/>
        <dbReference type="ChEBI" id="CHEBI:43474"/>
        <dbReference type="ChEBI" id="CHEBI:57798"/>
        <dbReference type="ChEBI" id="CHEBI:58130"/>
        <dbReference type="EC" id="3.1.3.8"/>
    </reaction>
    <physiologicalReaction direction="left-to-right" evidence="5">
        <dbReference type="Rhea" id="RHEA:16990"/>
    </physiologicalReaction>
</comment>
<comment type="catalytic activity">
    <reaction evidence="2">
        <text>1D-myo-inositol 1,2,4,5,6-pentakisphosphate + H2O = 1D-myo-inositol 1,2,5,6-tetrakisphosphate + phosphate</text>
        <dbReference type="Rhea" id="RHEA:77115"/>
        <dbReference type="ChEBI" id="CHEBI:15377"/>
        <dbReference type="ChEBI" id="CHEBI:43474"/>
        <dbReference type="ChEBI" id="CHEBI:57798"/>
        <dbReference type="ChEBI" id="CHEBI:195535"/>
    </reaction>
    <physiologicalReaction direction="left-to-right" evidence="2">
        <dbReference type="Rhea" id="RHEA:77116"/>
    </physiologicalReaction>
</comment>
<comment type="catalytic activity">
    <reaction evidence="2">
        <text>1D-myo-inositol 1,2,5,6-tetrakisphosphate + H2O = 1D-myo-inositol 1,2,6-trisphosphate + phosphate</text>
        <dbReference type="Rhea" id="RHEA:77119"/>
        <dbReference type="ChEBI" id="CHEBI:15377"/>
        <dbReference type="ChEBI" id="CHEBI:43474"/>
        <dbReference type="ChEBI" id="CHEBI:195535"/>
        <dbReference type="ChEBI" id="CHEBI:195537"/>
    </reaction>
    <physiologicalReaction direction="left-to-right" evidence="2">
        <dbReference type="Rhea" id="RHEA:77120"/>
    </physiologicalReaction>
</comment>
<comment type="catalytic activity">
    <reaction evidence="2">
        <text>1D-myo-inositol 1,2,6-trisphosphate + H2O = 1D-myo-inositol 1,2-bisphosphate + phosphate</text>
        <dbReference type="Rhea" id="RHEA:77131"/>
        <dbReference type="ChEBI" id="CHEBI:15377"/>
        <dbReference type="ChEBI" id="CHEBI:43474"/>
        <dbReference type="ChEBI" id="CHEBI:195537"/>
        <dbReference type="ChEBI" id="CHEBI:195539"/>
    </reaction>
    <physiologicalReaction direction="left-to-right" evidence="2">
        <dbReference type="Rhea" id="RHEA:77132"/>
    </physiologicalReaction>
</comment>
<comment type="catalytic activity">
    <reaction evidence="2">
        <text>1D-myo-inositol 1,2-bisphosphate + H2O = 1D-myo-inositol 2-phosphate + phosphate</text>
        <dbReference type="Rhea" id="RHEA:77135"/>
        <dbReference type="ChEBI" id="CHEBI:15377"/>
        <dbReference type="ChEBI" id="CHEBI:43474"/>
        <dbReference type="ChEBI" id="CHEBI:84142"/>
        <dbReference type="ChEBI" id="CHEBI:195539"/>
    </reaction>
    <physiologicalReaction direction="left-to-right" evidence="2">
        <dbReference type="Rhea" id="RHEA:77136"/>
    </physiologicalReaction>
</comment>
<comment type="biophysicochemical properties">
    <kinetics>
        <KM evidence="5">228 uM for Phytate</KM>
        <Vmax evidence="5">0.31 nmol/sec/mg enzyme towards phosphate</Vmax>
    </kinetics>
    <phDependence>
        <text evidence="5">Optimum pH is 3.5 and 5.5.</text>
    </phDependence>
    <temperatureDependence>
        <text evidence="5">Optimum temperature is 60 degrees Celsius.</text>
    </temperatureDependence>
</comment>
<comment type="subunit">
    <text evidence="1">Monomer.</text>
</comment>
<comment type="subcellular location">
    <subcellularLocation>
        <location evidence="7">Secreted</location>
    </subcellularLocation>
</comment>
<comment type="biotechnology">
    <text evidence="5">Phytic acid is the major storage form of phosphorus in plant seeds and, thus, in seed-based animal feed. Phytases are therefore of considerable economic interest.</text>
</comment>
<comment type="similarity">
    <text evidence="7">Belongs to the histidine acid phosphatase family.</text>
</comment>
<comment type="sequence caution" evidence="7">
    <conflict type="erroneous initiation">
        <sequence resource="EMBL-CDS" id="EAA33149"/>
    </conflict>
    <text>Extended N-terminus.</text>
</comment>
<organism>
    <name type="scientific">Neurospora crassa (strain ATCC 24698 / 74-OR23-1A / CBS 708.71 / DSM 1257 / FGSC 987)</name>
    <dbReference type="NCBI Taxonomy" id="367110"/>
    <lineage>
        <taxon>Eukaryota</taxon>
        <taxon>Fungi</taxon>
        <taxon>Dikarya</taxon>
        <taxon>Ascomycota</taxon>
        <taxon>Pezizomycotina</taxon>
        <taxon>Sordariomycetes</taxon>
        <taxon>Sordariomycetidae</taxon>
        <taxon>Sordariales</taxon>
        <taxon>Sordariaceae</taxon>
        <taxon>Neurospora</taxon>
    </lineage>
</organism>
<sequence length="509" mass="55828">MFLLMVPLFSYLAAASLRVLSPNPASCDSPELGYQCNSETTHTWGQYSPFFSVPSEISPSVPEGCRLTFAQVLSRHGARFPTPGKAAAISAVLTKIKTSATWYAPDFEFIKDYNYVLGVDHLTAFGEQEMVNSGIKFYQRYASLIRDYTDPESLPFIRASGQERVIASAENFTTGFYSALLADKNPPPSSLPLPRQEMVIISESPTANNTMHHGLCRAFEDSTTGDAAQATFIAANFPPITARLNAQGFKGVTLSDTDVLSLMDLCPFDTVAYPPSSSLTTSSSPSGGSKLSPFCSLFTAQDFTVYDYLQSLGKFYGYGPGNSLAATQGVGYVNELLARLTVSPVVDNTTTNSTLDGNEDTFPLSRNRTVFADFSHDNDMMGILTALRIFEGVDAEKMMDNTTIPREYGETGDDPANLKEREGLFKVGWVVPFAARVYFEKMICDGDGSGEMVQSEEEQDKELVRILVNDRVVKLNGCEADELGRCKLDKFVESMEFARRGGDWDKCFA</sequence>
<accession>Q7S9V5</accession>
<protein>
    <recommendedName>
        <fullName evidence="6">Phytase A</fullName>
        <ecNumber evidence="2">3.1.3.-</ecNumber>
        <ecNumber evidence="5">3.1.3.8</ecNumber>
    </recommendedName>
    <alternativeName>
        <fullName evidence="2">Histidine acid phosphatase phyA</fullName>
        <shortName evidence="2">HAP</shortName>
    </alternativeName>
    <alternativeName>
        <fullName evidence="2">Myo-inositol hexakisphosphate phosphohydrolase A</fullName>
    </alternativeName>
    <alternativeName>
        <fullName evidence="2">Myo-inositol-hexaphosphate 3-phosphohydrolase A</fullName>
    </alternativeName>
</protein>
<feature type="signal peptide" evidence="3">
    <location>
        <begin position="1"/>
        <end position="15"/>
    </location>
</feature>
<feature type="chain" id="PRO_0000459180" description="Phytase A" evidence="3">
    <location>
        <begin position="16"/>
        <end position="509"/>
    </location>
</feature>
<feature type="active site" description="Nucleophile" evidence="2">
    <location>
        <position position="76"/>
    </location>
</feature>
<feature type="binding site" evidence="2">
    <location>
        <position position="46"/>
    </location>
    <ligand>
        <name>1D-myo-inositol hexakisphosphate</name>
        <dbReference type="ChEBI" id="CHEBI:58130"/>
    </ligand>
</feature>
<feature type="binding site" evidence="2">
    <location>
        <position position="47"/>
    </location>
    <ligand>
        <name>1D-myo-inositol hexakisphosphate</name>
        <dbReference type="ChEBI" id="CHEBI:58130"/>
    </ligand>
</feature>
<feature type="binding site" evidence="2">
    <location>
        <position position="75"/>
    </location>
    <ligand>
        <name>1D-myo-inositol hexakisphosphate</name>
        <dbReference type="ChEBI" id="CHEBI:58130"/>
    </ligand>
</feature>
<feature type="binding site" evidence="2">
    <location>
        <position position="76"/>
    </location>
    <ligand>
        <name>1D-myo-inositol hexakisphosphate</name>
        <dbReference type="ChEBI" id="CHEBI:58130"/>
    </ligand>
</feature>
<feature type="binding site" evidence="2">
    <location>
        <position position="79"/>
    </location>
    <ligand>
        <name>1D-myo-inositol hexakisphosphate</name>
        <dbReference type="ChEBI" id="CHEBI:58130"/>
    </ligand>
</feature>
<feature type="binding site" evidence="2">
    <location>
        <position position="82"/>
    </location>
    <ligand>
        <name>1D-myo-inositol hexakisphosphate</name>
        <dbReference type="ChEBI" id="CHEBI:58130"/>
    </ligand>
</feature>
<feature type="binding site" evidence="2">
    <location>
        <position position="164"/>
    </location>
    <ligand>
        <name>1D-myo-inositol hexakisphosphate</name>
        <dbReference type="ChEBI" id="CHEBI:58130"/>
    </ligand>
</feature>
<feature type="binding site" evidence="2">
    <location>
        <position position="314"/>
    </location>
    <ligand>
        <name>1D-myo-inositol hexakisphosphate</name>
        <dbReference type="ChEBI" id="CHEBI:58130"/>
    </ligand>
</feature>
<feature type="binding site" evidence="2">
    <location>
        <position position="376"/>
    </location>
    <ligand>
        <name>1D-myo-inositol hexakisphosphate</name>
        <dbReference type="ChEBI" id="CHEBI:58130"/>
    </ligand>
</feature>
<feature type="binding site" evidence="2">
    <location>
        <position position="377"/>
    </location>
    <ligand>
        <name>1D-myo-inositol hexakisphosphate</name>
        <dbReference type="ChEBI" id="CHEBI:58130"/>
    </ligand>
</feature>
<feature type="glycosylation site" description="N-linked (GlcNAc...) asparagine" evidence="4">
    <location>
        <position position="171"/>
    </location>
</feature>
<feature type="glycosylation site" description="N-linked (GlcNAc...) asparagine" evidence="4">
    <location>
        <position position="208"/>
    </location>
</feature>
<feature type="glycosylation site" description="N-linked (GlcNAc...) asparagine" evidence="4">
    <location>
        <position position="348"/>
    </location>
</feature>
<feature type="glycosylation site" description="N-linked (GlcNAc...) asparagine" evidence="4">
    <location>
        <position position="352"/>
    </location>
</feature>
<feature type="glycosylation site" description="N-linked (GlcNAc...) asparagine" evidence="4">
    <location>
        <position position="367"/>
    </location>
</feature>
<feature type="glycosylation site" description="N-linked (GlcNAc...) asparagine" evidence="4">
    <location>
        <position position="401"/>
    </location>
</feature>
<feature type="disulfide bond" evidence="2">
    <location>
        <begin position="27"/>
        <end position="36"/>
    </location>
</feature>
<feature type="disulfide bond" evidence="2">
    <location>
        <begin position="65"/>
        <end position="444"/>
    </location>
</feature>
<feature type="disulfide bond" evidence="2">
    <location>
        <begin position="216"/>
        <end position="507"/>
    </location>
</feature>
<feature type="disulfide bond" evidence="2">
    <location>
        <begin position="266"/>
        <end position="295"/>
    </location>
</feature>
<feature type="disulfide bond" evidence="2">
    <location>
        <begin position="478"/>
        <end position="486"/>
    </location>
</feature>
<name>PHYA_NEUCR</name>
<proteinExistence type="evidence at protein level"/>
<keyword id="KW-1015">Disulfide bond</keyword>
<keyword id="KW-0325">Glycoprotein</keyword>
<keyword id="KW-0378">Hydrolase</keyword>
<keyword id="KW-1185">Reference proteome</keyword>
<keyword id="KW-0964">Secreted</keyword>
<keyword id="KW-0732">Signal</keyword>
<dbReference type="EC" id="3.1.3.-" evidence="2"/>
<dbReference type="EC" id="3.1.3.8" evidence="5"/>
<dbReference type="EMBL" id="CM002239">
    <property type="protein sequence ID" value="EAA33149.3"/>
    <property type="status" value="ALT_INIT"/>
    <property type="molecule type" value="Genomic_DNA"/>
</dbReference>
<dbReference type="RefSeq" id="XP_962385.3">
    <property type="nucleotide sequence ID" value="XM_957292.3"/>
</dbReference>
<dbReference type="SMR" id="Q7S9V5"/>
<dbReference type="STRING" id="367110.Q7S9V5"/>
<dbReference type="PaxDb" id="5141-EFNCRP00000006110"/>
<dbReference type="EnsemblFungi" id="EAA33149">
    <property type="protein sequence ID" value="EAA33149"/>
    <property type="gene ID" value="NCU06351"/>
</dbReference>
<dbReference type="GeneID" id="3878524"/>
<dbReference type="KEGG" id="ncr:NCU06351"/>
<dbReference type="VEuPathDB" id="FungiDB:NCU06351"/>
<dbReference type="HOGENOM" id="CLU_020880_0_1_1"/>
<dbReference type="InParanoid" id="Q7S9V5"/>
<dbReference type="OrthoDB" id="6509975at2759"/>
<dbReference type="Proteomes" id="UP000001805">
    <property type="component" value="Chromosome 4, Linkage Group IV"/>
</dbReference>
<dbReference type="GO" id="GO:0005576">
    <property type="term" value="C:extracellular region"/>
    <property type="evidence" value="ECO:0007669"/>
    <property type="project" value="UniProtKB-SubCell"/>
</dbReference>
<dbReference type="GO" id="GO:0016158">
    <property type="term" value="F:3-phytase activity"/>
    <property type="evidence" value="ECO:0007669"/>
    <property type="project" value="UniProtKB-EC"/>
</dbReference>
<dbReference type="GO" id="GO:0003993">
    <property type="term" value="F:acid phosphatase activity"/>
    <property type="evidence" value="ECO:0000318"/>
    <property type="project" value="GO_Central"/>
</dbReference>
<dbReference type="CDD" id="cd07061">
    <property type="entry name" value="HP_HAP_like"/>
    <property type="match status" value="1"/>
</dbReference>
<dbReference type="Gene3D" id="3.40.50.1240">
    <property type="entry name" value="Phosphoglycerate mutase-like"/>
    <property type="match status" value="1"/>
</dbReference>
<dbReference type="InterPro" id="IPR033379">
    <property type="entry name" value="Acid_Pase_AS"/>
</dbReference>
<dbReference type="InterPro" id="IPR000560">
    <property type="entry name" value="His_Pase_clade-2"/>
</dbReference>
<dbReference type="InterPro" id="IPR029033">
    <property type="entry name" value="His_PPase_superfam"/>
</dbReference>
<dbReference type="InterPro" id="IPR016274">
    <property type="entry name" value="Histidine_acid_Pase_euk"/>
</dbReference>
<dbReference type="PANTHER" id="PTHR20963:SF24">
    <property type="entry name" value="3-PHYTASE B"/>
    <property type="match status" value="1"/>
</dbReference>
<dbReference type="PANTHER" id="PTHR20963">
    <property type="entry name" value="MULTIPLE INOSITOL POLYPHOSPHATE PHOSPHATASE-RELATED"/>
    <property type="match status" value="1"/>
</dbReference>
<dbReference type="Pfam" id="PF00328">
    <property type="entry name" value="His_Phos_2"/>
    <property type="match status" value="1"/>
</dbReference>
<dbReference type="PIRSF" id="PIRSF000894">
    <property type="entry name" value="Acid_phosphatase"/>
    <property type="match status" value="1"/>
</dbReference>
<dbReference type="SUPFAM" id="SSF53254">
    <property type="entry name" value="Phosphoglycerate mutase-like"/>
    <property type="match status" value="1"/>
</dbReference>
<dbReference type="PROSITE" id="PS00616">
    <property type="entry name" value="HIS_ACID_PHOSPHAT_1"/>
    <property type="match status" value="1"/>
</dbReference>
<dbReference type="PROSITE" id="PS00778">
    <property type="entry name" value="HIS_ACID_PHOSPHAT_2"/>
    <property type="match status" value="1"/>
</dbReference>
<reference key="1">
    <citation type="journal article" date="2003" name="Nature">
        <title>The genome sequence of the filamentous fungus Neurospora crassa.</title>
        <authorList>
            <person name="Galagan J.E."/>
            <person name="Calvo S.E."/>
            <person name="Borkovich K.A."/>
            <person name="Selker E.U."/>
            <person name="Read N.D."/>
            <person name="Jaffe D.B."/>
            <person name="FitzHugh W."/>
            <person name="Ma L.-J."/>
            <person name="Smirnov S."/>
            <person name="Purcell S."/>
            <person name="Rehman B."/>
            <person name="Elkins T."/>
            <person name="Engels R."/>
            <person name="Wang S."/>
            <person name="Nielsen C.B."/>
            <person name="Butler J."/>
            <person name="Endrizzi M."/>
            <person name="Qui D."/>
            <person name="Ianakiev P."/>
            <person name="Bell-Pedersen D."/>
            <person name="Nelson M.A."/>
            <person name="Werner-Washburne M."/>
            <person name="Selitrennikoff C.P."/>
            <person name="Kinsey J.A."/>
            <person name="Braun E.L."/>
            <person name="Zelter A."/>
            <person name="Schulte U."/>
            <person name="Kothe G.O."/>
            <person name="Jedd G."/>
            <person name="Mewes H.-W."/>
            <person name="Staben C."/>
            <person name="Marcotte E."/>
            <person name="Greenberg D."/>
            <person name="Roy A."/>
            <person name="Foley K."/>
            <person name="Naylor J."/>
            <person name="Stange-Thomann N."/>
            <person name="Barrett R."/>
            <person name="Gnerre S."/>
            <person name="Kamal M."/>
            <person name="Kamvysselis M."/>
            <person name="Mauceli E.W."/>
            <person name="Bielke C."/>
            <person name="Rudd S."/>
            <person name="Frishman D."/>
            <person name="Krystofova S."/>
            <person name="Rasmussen C."/>
            <person name="Metzenberg R.L."/>
            <person name="Perkins D.D."/>
            <person name="Kroken S."/>
            <person name="Cogoni C."/>
            <person name="Macino G."/>
            <person name="Catcheside D.E.A."/>
            <person name="Li W."/>
            <person name="Pratt R.J."/>
            <person name="Osmani S.A."/>
            <person name="DeSouza C.P.C."/>
            <person name="Glass N.L."/>
            <person name="Orbach M.J."/>
            <person name="Berglund J.A."/>
            <person name="Voelker R."/>
            <person name="Yarden O."/>
            <person name="Plamann M."/>
            <person name="Seiler S."/>
            <person name="Dunlap J.C."/>
            <person name="Radford A."/>
            <person name="Aramayo R."/>
            <person name="Natvig D.O."/>
            <person name="Alex L.A."/>
            <person name="Mannhaupt G."/>
            <person name="Ebbole D.J."/>
            <person name="Freitag M."/>
            <person name="Paulsen I."/>
            <person name="Sachs M.S."/>
            <person name="Lander E.S."/>
            <person name="Nusbaum C."/>
            <person name="Birren B.W."/>
        </authorList>
    </citation>
    <scope>NUCLEOTIDE SEQUENCE [LARGE SCALE GENOMIC DNA]</scope>
    <source>
        <strain>ATCC 24698 / 74-OR23-1A / CBS 708.71 / DSM 1257 / FGSC 987</strain>
    </source>
</reference>
<reference key="2">
    <citation type="journal article" date="2006" name="FEMS Microbiol. Lett.">
        <title>Biochemical properties of a thermostable phytase from Neurospora crassa.</title>
        <authorList>
            <person name="Zhou X.L."/>
            <person name="Shen W."/>
            <person name="Zhuge J."/>
            <person name="Wang Z.X."/>
        </authorList>
    </citation>
    <scope>FUNCTION</scope>
    <scope>CATALYTIC ACTIVITY</scope>
    <scope>BIOPHYSICOCHEMICAL PROPERTIES</scope>
    <scope>BIOTECHNOLOGY</scope>
</reference>
<gene>
    <name type="primary">pht-1</name>
    <name evidence="6" type="synonym">phyA</name>
    <name type="ORF">NCU06351</name>
</gene>
<evidence type="ECO:0000250" key="1">
    <source>
        <dbReference type="UniProtKB" id="O00085"/>
    </source>
</evidence>
<evidence type="ECO:0000250" key="2">
    <source>
        <dbReference type="UniProtKB" id="P34752"/>
    </source>
</evidence>
<evidence type="ECO:0000255" key="3"/>
<evidence type="ECO:0000255" key="4">
    <source>
        <dbReference type="PROSITE-ProRule" id="PRU00498"/>
    </source>
</evidence>
<evidence type="ECO:0000269" key="5">
    <source>
    </source>
</evidence>
<evidence type="ECO:0000303" key="6">
    <source>
    </source>
</evidence>
<evidence type="ECO:0000305" key="7"/>